<organism>
    <name type="scientific">Salmonella typhimurium (strain LT2 / SGSC1412 / ATCC 700720)</name>
    <dbReference type="NCBI Taxonomy" id="99287"/>
    <lineage>
        <taxon>Bacteria</taxon>
        <taxon>Pseudomonadati</taxon>
        <taxon>Pseudomonadota</taxon>
        <taxon>Gammaproteobacteria</taxon>
        <taxon>Enterobacterales</taxon>
        <taxon>Enterobacteriaceae</taxon>
        <taxon>Salmonella</taxon>
    </lineage>
</organism>
<accession>Q8ZR41</accession>
<name>GCS2_SALTY</name>
<keyword id="KW-0002">3D-structure</keyword>
<keyword id="KW-0067">ATP-binding</keyword>
<keyword id="KW-0436">Ligase</keyword>
<keyword id="KW-0547">Nucleotide-binding</keyword>
<keyword id="KW-1185">Reference proteome</keyword>
<gene>
    <name type="primary">ybdK</name>
    <name type="ordered locus">STM0583</name>
</gene>
<proteinExistence type="evidence at protein level"/>
<evidence type="ECO:0000255" key="1">
    <source>
        <dbReference type="HAMAP-Rule" id="MF_01609"/>
    </source>
</evidence>
<evidence type="ECO:0007829" key="2">
    <source>
        <dbReference type="PDB" id="1TT4"/>
    </source>
</evidence>
<feature type="chain" id="PRO_0000218217" description="Putative glutamate--cysteine ligase 2">
    <location>
        <begin position="1"/>
        <end position="372"/>
    </location>
</feature>
<feature type="strand" evidence="2">
    <location>
        <begin position="14"/>
        <end position="23"/>
    </location>
</feature>
<feature type="turn" evidence="2">
    <location>
        <begin position="25"/>
        <end position="27"/>
    </location>
</feature>
<feature type="helix" evidence="2">
    <location>
        <begin position="37"/>
        <end position="41"/>
    </location>
</feature>
<feature type="helix" evidence="2">
    <location>
        <begin position="42"/>
        <end position="44"/>
    </location>
</feature>
<feature type="strand" evidence="2">
    <location>
        <begin position="47"/>
        <end position="52"/>
    </location>
</feature>
<feature type="strand" evidence="2">
    <location>
        <begin position="58"/>
        <end position="62"/>
    </location>
</feature>
<feature type="strand" evidence="2">
    <location>
        <begin position="66"/>
        <end position="68"/>
    </location>
</feature>
<feature type="helix" evidence="2">
    <location>
        <begin position="69"/>
        <end position="89"/>
    </location>
</feature>
<feature type="strand" evidence="2">
    <location>
        <begin position="93"/>
        <end position="95"/>
    </location>
</feature>
<feature type="helix" evidence="2">
    <location>
        <begin position="119"/>
        <end position="123"/>
    </location>
</feature>
<feature type="helix" evidence="2">
    <location>
        <begin position="124"/>
        <end position="127"/>
    </location>
</feature>
<feature type="strand" evidence="2">
    <location>
        <begin position="134"/>
        <end position="140"/>
    </location>
</feature>
<feature type="strand" evidence="2">
    <location>
        <begin position="142"/>
        <end position="144"/>
    </location>
</feature>
<feature type="helix" evidence="2">
    <location>
        <begin position="145"/>
        <end position="155"/>
    </location>
</feature>
<feature type="helix" evidence="2">
    <location>
        <begin position="158"/>
        <end position="165"/>
    </location>
</feature>
<feature type="helix" evidence="2">
    <location>
        <begin position="182"/>
        <end position="186"/>
    </location>
</feature>
<feature type="helix" evidence="2">
    <location>
        <begin position="201"/>
        <end position="211"/>
    </location>
</feature>
<feature type="strand" evidence="2">
    <location>
        <begin position="214"/>
        <end position="216"/>
    </location>
</feature>
<feature type="helix" evidence="2">
    <location>
        <begin position="220"/>
        <end position="222"/>
    </location>
</feature>
<feature type="strand" evidence="2">
    <location>
        <begin position="226"/>
        <end position="230"/>
    </location>
</feature>
<feature type="turn" evidence="2">
    <location>
        <begin position="231"/>
        <end position="234"/>
    </location>
</feature>
<feature type="strand" evidence="2">
    <location>
        <begin position="235"/>
        <end position="242"/>
    </location>
</feature>
<feature type="helix" evidence="2">
    <location>
        <begin position="247"/>
        <end position="267"/>
    </location>
</feature>
<feature type="helix" evidence="2">
    <location>
        <begin position="274"/>
        <end position="279"/>
    </location>
</feature>
<feature type="helix" evidence="2">
    <location>
        <begin position="280"/>
        <end position="289"/>
    </location>
</feature>
<feature type="strand" evidence="2">
    <location>
        <begin position="294"/>
        <end position="297"/>
    </location>
</feature>
<feature type="turn" evidence="2">
    <location>
        <begin position="299"/>
        <end position="301"/>
    </location>
</feature>
<feature type="strand" evidence="2">
    <location>
        <begin position="304"/>
        <end position="306"/>
    </location>
</feature>
<feature type="helix" evidence="2">
    <location>
        <begin position="307"/>
        <end position="317"/>
    </location>
</feature>
<feature type="helix" evidence="2">
    <location>
        <begin position="319"/>
        <end position="325"/>
    </location>
</feature>
<feature type="helix" evidence="2">
    <location>
        <begin position="328"/>
        <end position="339"/>
    </location>
</feature>
<feature type="helix" evidence="2">
    <location>
        <begin position="344"/>
        <end position="353"/>
    </location>
</feature>
<feature type="helix" evidence="2">
    <location>
        <begin position="358"/>
        <end position="368"/>
    </location>
</feature>
<comment type="function">
    <text evidence="1">ATP-dependent carboxylate-amine ligase which exhibits weak glutamate--cysteine ligase activity.</text>
</comment>
<comment type="catalytic activity">
    <reaction evidence="1">
        <text>L-cysteine + L-glutamate + ATP = gamma-L-glutamyl-L-cysteine + ADP + phosphate + H(+)</text>
        <dbReference type="Rhea" id="RHEA:13285"/>
        <dbReference type="ChEBI" id="CHEBI:15378"/>
        <dbReference type="ChEBI" id="CHEBI:29985"/>
        <dbReference type="ChEBI" id="CHEBI:30616"/>
        <dbReference type="ChEBI" id="CHEBI:35235"/>
        <dbReference type="ChEBI" id="CHEBI:43474"/>
        <dbReference type="ChEBI" id="CHEBI:58173"/>
        <dbReference type="ChEBI" id="CHEBI:456216"/>
        <dbReference type="EC" id="6.3.2.2"/>
    </reaction>
</comment>
<comment type="subunit">
    <text evidence="1">Homodimer.</text>
</comment>
<comment type="similarity">
    <text evidence="1">Belongs to the glutamate--cysteine ligase type 2 family. YbdK subfamily.</text>
</comment>
<sequence length="372" mass="41597">MALNDFHVSEPYTLGIELEMQVINPPGYDLSQDSSTLIDAVKPQLTAGEIKHDITESMLEMATGVCRDIDQAAAQLSAMQHVILQAASEHHLGICGGGTHPFQKWQRQEVCDNERYQRTLENFGYLIQQATVFGQHVHVGCANGDDAIYLLHGLSHFVPHFIALSAASPYMQGADTRFACARLNIFSAFPDNGPMPWVSNWQEFAGLFRRLSYTTMIDSIKDLHWDIRPSPAFGTVEVRVMDTPLTLDHAINMAGLIQATAHWLLTERPFKPQEQDYLLYKFNRFQACRYGLEGVLTDAYTGDRRRLADDTLRLLDNVTPSARKLGADSAIDALRLQVKKGGNEAQYMREFIADGGSLIGLVQKHCEIWAGQ</sequence>
<dbReference type="EC" id="6.3.2.2" evidence="1"/>
<dbReference type="EMBL" id="AE006468">
    <property type="protein sequence ID" value="AAL19534.1"/>
    <property type="molecule type" value="Genomic_DNA"/>
</dbReference>
<dbReference type="RefSeq" id="NP_459575.1">
    <property type="nucleotide sequence ID" value="NC_003197.2"/>
</dbReference>
<dbReference type="RefSeq" id="WP_001196903.1">
    <property type="nucleotide sequence ID" value="NC_003197.2"/>
</dbReference>
<dbReference type="PDB" id="1TT4">
    <property type="method" value="X-ray"/>
    <property type="resolution" value="2.80 A"/>
    <property type="chains" value="A/B=1-372"/>
</dbReference>
<dbReference type="PDBsum" id="1TT4"/>
<dbReference type="SMR" id="Q8ZR41"/>
<dbReference type="STRING" id="99287.STM0583"/>
<dbReference type="PaxDb" id="99287-STM0583"/>
<dbReference type="GeneID" id="1252103"/>
<dbReference type="KEGG" id="stm:STM0583"/>
<dbReference type="PATRIC" id="fig|99287.12.peg.615"/>
<dbReference type="HOGENOM" id="CLU_044848_1_1_6"/>
<dbReference type="OMA" id="THPFAQW"/>
<dbReference type="PhylomeDB" id="Q8ZR41"/>
<dbReference type="BioCyc" id="SENT99287:STM0583-MONOMER"/>
<dbReference type="EvolutionaryTrace" id="Q8ZR41"/>
<dbReference type="Proteomes" id="UP000001014">
    <property type="component" value="Chromosome"/>
</dbReference>
<dbReference type="GO" id="GO:0005524">
    <property type="term" value="F:ATP binding"/>
    <property type="evidence" value="ECO:0007669"/>
    <property type="project" value="UniProtKB-KW"/>
</dbReference>
<dbReference type="GO" id="GO:0004357">
    <property type="term" value="F:glutamate-cysteine ligase activity"/>
    <property type="evidence" value="ECO:0007669"/>
    <property type="project" value="UniProtKB-EC"/>
</dbReference>
<dbReference type="GO" id="GO:0016879">
    <property type="term" value="F:ligase activity, forming carbon-nitrogen bonds"/>
    <property type="evidence" value="ECO:0000318"/>
    <property type="project" value="GO_Central"/>
</dbReference>
<dbReference type="GO" id="GO:0042398">
    <property type="term" value="P:modified amino acid biosynthetic process"/>
    <property type="evidence" value="ECO:0007669"/>
    <property type="project" value="InterPro"/>
</dbReference>
<dbReference type="FunFam" id="3.30.590.20:FF:000002">
    <property type="entry name" value="Putative glutamate--cysteine ligase 2"/>
    <property type="match status" value="1"/>
</dbReference>
<dbReference type="Gene3D" id="3.30.590.20">
    <property type="match status" value="1"/>
</dbReference>
<dbReference type="HAMAP" id="MF_01609">
    <property type="entry name" value="Glu_cys_ligase_2"/>
    <property type="match status" value="1"/>
</dbReference>
<dbReference type="InterPro" id="IPR050141">
    <property type="entry name" value="GCL_type2/YbdK_subfam"/>
</dbReference>
<dbReference type="InterPro" id="IPR006336">
    <property type="entry name" value="GCS2"/>
</dbReference>
<dbReference type="InterPro" id="IPR014746">
    <property type="entry name" value="Gln_synth/guanido_kin_cat_dom"/>
</dbReference>
<dbReference type="InterPro" id="IPR011793">
    <property type="entry name" value="YbdK"/>
</dbReference>
<dbReference type="NCBIfam" id="TIGR02050">
    <property type="entry name" value="gshA_cyan_rel"/>
    <property type="match status" value="1"/>
</dbReference>
<dbReference type="NCBIfam" id="NF010040">
    <property type="entry name" value="PRK13516.1"/>
    <property type="match status" value="1"/>
</dbReference>
<dbReference type="PANTHER" id="PTHR36510">
    <property type="entry name" value="GLUTAMATE--CYSTEINE LIGASE 2-RELATED"/>
    <property type="match status" value="1"/>
</dbReference>
<dbReference type="PANTHER" id="PTHR36510:SF1">
    <property type="entry name" value="GLUTAMATE--CYSTEINE LIGASE 2-RELATED"/>
    <property type="match status" value="1"/>
</dbReference>
<dbReference type="Pfam" id="PF04107">
    <property type="entry name" value="GCS2"/>
    <property type="match status" value="1"/>
</dbReference>
<dbReference type="SUPFAM" id="SSF55931">
    <property type="entry name" value="Glutamine synthetase/guanido kinase"/>
    <property type="match status" value="1"/>
</dbReference>
<reference key="1">
    <citation type="journal article" date="2001" name="Nature">
        <title>Complete genome sequence of Salmonella enterica serovar Typhimurium LT2.</title>
        <authorList>
            <person name="McClelland M."/>
            <person name="Sanderson K.E."/>
            <person name="Spieth J."/>
            <person name="Clifton S.W."/>
            <person name="Latreille P."/>
            <person name="Courtney L."/>
            <person name="Porwollik S."/>
            <person name="Ali J."/>
            <person name="Dante M."/>
            <person name="Du F."/>
            <person name="Hou S."/>
            <person name="Layman D."/>
            <person name="Leonard S."/>
            <person name="Nguyen C."/>
            <person name="Scott K."/>
            <person name="Holmes A."/>
            <person name="Grewal N."/>
            <person name="Mulvaney E."/>
            <person name="Ryan E."/>
            <person name="Sun H."/>
            <person name="Florea L."/>
            <person name="Miller W."/>
            <person name="Stoneking T."/>
            <person name="Nhan M."/>
            <person name="Waterston R."/>
            <person name="Wilson R.K."/>
        </authorList>
    </citation>
    <scope>NUCLEOTIDE SEQUENCE [LARGE SCALE GENOMIC DNA]</scope>
    <source>
        <strain>LT2 / SGSC1412 / ATCC 700720</strain>
    </source>
</reference>
<protein>
    <recommendedName>
        <fullName evidence="1">Putative glutamate--cysteine ligase 2</fullName>
        <ecNumber evidence="1">6.3.2.2</ecNumber>
    </recommendedName>
    <alternativeName>
        <fullName evidence="1">Gamma-glutamylcysteine synthetase 2</fullName>
        <shortName evidence="1">GCS 2</shortName>
        <shortName evidence="1">Gamma-GCS 2</shortName>
    </alternativeName>
</protein>